<accession>Q1MRQ0</accession>
<reference key="1">
    <citation type="submission" date="2005-11" db="EMBL/GenBank/DDBJ databases">
        <title>The complete genome sequence of Lawsonia intracellularis: the causative agent of proliferative enteropathy.</title>
        <authorList>
            <person name="Kaur K."/>
            <person name="Zhang Q."/>
            <person name="Beckler D."/>
            <person name="Munir S."/>
            <person name="Li L."/>
            <person name="Kinsley K."/>
            <person name="Herron L."/>
            <person name="Peterson A."/>
            <person name="May B."/>
            <person name="Singh S."/>
            <person name="Gebhart C."/>
            <person name="Kapur V."/>
        </authorList>
    </citation>
    <scope>NUCLEOTIDE SEQUENCE [LARGE SCALE GENOMIC DNA]</scope>
    <source>
        <strain>PHE/MN1-00</strain>
    </source>
</reference>
<keyword id="KW-0963">Cytoplasm</keyword>
<keyword id="KW-0489">Methyltransferase</keyword>
<keyword id="KW-1185">Reference proteome</keyword>
<keyword id="KW-0698">rRNA processing</keyword>
<keyword id="KW-0949">S-adenosyl-L-methionine</keyword>
<keyword id="KW-0808">Transferase</keyword>
<name>RLME_LAWIP</name>
<proteinExistence type="inferred from homology"/>
<organism>
    <name type="scientific">Lawsonia intracellularis (strain PHE/MN1-00)</name>
    <dbReference type="NCBI Taxonomy" id="363253"/>
    <lineage>
        <taxon>Bacteria</taxon>
        <taxon>Pseudomonadati</taxon>
        <taxon>Thermodesulfobacteriota</taxon>
        <taxon>Desulfovibrionia</taxon>
        <taxon>Desulfovibrionales</taxon>
        <taxon>Desulfovibrionaceae</taxon>
        <taxon>Lawsonia</taxon>
    </lineage>
</organism>
<dbReference type="EC" id="2.1.1.166" evidence="1"/>
<dbReference type="EMBL" id="AM180252">
    <property type="protein sequence ID" value="CAJ54326.1"/>
    <property type="molecule type" value="Genomic_DNA"/>
</dbReference>
<dbReference type="RefSeq" id="WP_011526355.1">
    <property type="nucleotide sequence ID" value="NC_008011.1"/>
</dbReference>
<dbReference type="SMR" id="Q1MRQ0"/>
<dbReference type="STRING" id="363253.LI0270"/>
<dbReference type="KEGG" id="lip:LI0270"/>
<dbReference type="eggNOG" id="COG0293">
    <property type="taxonomic scope" value="Bacteria"/>
</dbReference>
<dbReference type="HOGENOM" id="CLU_009422_4_0_7"/>
<dbReference type="OrthoDB" id="9790080at2"/>
<dbReference type="Proteomes" id="UP000002430">
    <property type="component" value="Chromosome"/>
</dbReference>
<dbReference type="GO" id="GO:0005737">
    <property type="term" value="C:cytoplasm"/>
    <property type="evidence" value="ECO:0007669"/>
    <property type="project" value="UniProtKB-SubCell"/>
</dbReference>
<dbReference type="GO" id="GO:0008650">
    <property type="term" value="F:rRNA (uridine-2'-O-)-methyltransferase activity"/>
    <property type="evidence" value="ECO:0007669"/>
    <property type="project" value="UniProtKB-UniRule"/>
</dbReference>
<dbReference type="CDD" id="cd02440">
    <property type="entry name" value="AdoMet_MTases"/>
    <property type="match status" value="1"/>
</dbReference>
<dbReference type="Gene3D" id="3.40.50.150">
    <property type="entry name" value="Vaccinia Virus protein VP39"/>
    <property type="match status" value="1"/>
</dbReference>
<dbReference type="HAMAP" id="MF_01547">
    <property type="entry name" value="RNA_methyltr_E"/>
    <property type="match status" value="1"/>
</dbReference>
<dbReference type="InterPro" id="IPR050082">
    <property type="entry name" value="RNA_methyltr_RlmE"/>
</dbReference>
<dbReference type="InterPro" id="IPR002877">
    <property type="entry name" value="RNA_MeTrfase_FtsJ_dom"/>
</dbReference>
<dbReference type="InterPro" id="IPR015507">
    <property type="entry name" value="rRNA-MeTfrase_E"/>
</dbReference>
<dbReference type="InterPro" id="IPR029063">
    <property type="entry name" value="SAM-dependent_MTases_sf"/>
</dbReference>
<dbReference type="PANTHER" id="PTHR10920">
    <property type="entry name" value="RIBOSOMAL RNA METHYLTRANSFERASE"/>
    <property type="match status" value="1"/>
</dbReference>
<dbReference type="PANTHER" id="PTHR10920:SF18">
    <property type="entry name" value="RRNA METHYLTRANSFERASE 2, MITOCHONDRIAL"/>
    <property type="match status" value="1"/>
</dbReference>
<dbReference type="Pfam" id="PF01728">
    <property type="entry name" value="FtsJ"/>
    <property type="match status" value="1"/>
</dbReference>
<dbReference type="PIRSF" id="PIRSF005461">
    <property type="entry name" value="23S_rRNA_mtase"/>
    <property type="match status" value="1"/>
</dbReference>
<dbReference type="SUPFAM" id="SSF53335">
    <property type="entry name" value="S-adenosyl-L-methionine-dependent methyltransferases"/>
    <property type="match status" value="1"/>
</dbReference>
<feature type="chain" id="PRO_0000282756" description="Ribosomal RNA large subunit methyltransferase E">
    <location>
        <begin position="1"/>
        <end position="200"/>
    </location>
</feature>
<feature type="active site" description="Proton acceptor" evidence="1">
    <location>
        <position position="151"/>
    </location>
</feature>
<feature type="binding site" evidence="1">
    <location>
        <position position="49"/>
    </location>
    <ligand>
        <name>S-adenosyl-L-methionine</name>
        <dbReference type="ChEBI" id="CHEBI:59789"/>
    </ligand>
</feature>
<feature type="binding site" evidence="1">
    <location>
        <position position="51"/>
    </location>
    <ligand>
        <name>S-adenosyl-L-methionine</name>
        <dbReference type="ChEBI" id="CHEBI:59789"/>
    </ligand>
</feature>
<feature type="binding site" evidence="1">
    <location>
        <position position="69"/>
    </location>
    <ligand>
        <name>S-adenosyl-L-methionine</name>
        <dbReference type="ChEBI" id="CHEBI:59789"/>
    </ligand>
</feature>
<feature type="binding site" evidence="1">
    <location>
        <position position="87"/>
    </location>
    <ligand>
        <name>S-adenosyl-L-methionine</name>
        <dbReference type="ChEBI" id="CHEBI:59789"/>
    </ligand>
</feature>
<feature type="binding site" evidence="1">
    <location>
        <position position="111"/>
    </location>
    <ligand>
        <name>S-adenosyl-L-methionine</name>
        <dbReference type="ChEBI" id="CHEBI:59789"/>
    </ligand>
</feature>
<gene>
    <name evidence="1" type="primary">rlmE</name>
    <name evidence="1" type="synonym">ftsJ</name>
    <name evidence="1" type="synonym">rrmJ</name>
    <name type="ordered locus">LI0270</name>
</gene>
<sequence length="200" mass="22758">MKPYRDYYFLKAKHEKYPARSIYKLKEIDNRFCLFQKGMSVLDLGASPGSWSLGAAEKVGKTGRVVSCDIQTITIPLPSNVSFFQEDIFHRSDSFNNILIKEGPFHVIMSDMAPQTTGVKITDHSRSLELCLEALAIAKCYLLQQGSFIVKIFMGADTIELVKEMRQHFERVTSFKPCSSRTKSKEIFYVGLGFKRFTTS</sequence>
<protein>
    <recommendedName>
        <fullName evidence="1">Ribosomal RNA large subunit methyltransferase E</fullName>
        <ecNumber evidence="1">2.1.1.166</ecNumber>
    </recommendedName>
    <alternativeName>
        <fullName evidence="1">23S rRNA Um2552 methyltransferase</fullName>
    </alternativeName>
    <alternativeName>
        <fullName evidence="1">rRNA (uridine-2'-O-)-methyltransferase</fullName>
    </alternativeName>
</protein>
<evidence type="ECO:0000255" key="1">
    <source>
        <dbReference type="HAMAP-Rule" id="MF_01547"/>
    </source>
</evidence>
<comment type="function">
    <text evidence="1">Specifically methylates the uridine in position 2552 of 23S rRNA at the 2'-O position of the ribose in the fully assembled 50S ribosomal subunit.</text>
</comment>
<comment type="catalytic activity">
    <reaction evidence="1">
        <text>uridine(2552) in 23S rRNA + S-adenosyl-L-methionine = 2'-O-methyluridine(2552) in 23S rRNA + S-adenosyl-L-homocysteine + H(+)</text>
        <dbReference type="Rhea" id="RHEA:42720"/>
        <dbReference type="Rhea" id="RHEA-COMP:10202"/>
        <dbReference type="Rhea" id="RHEA-COMP:10203"/>
        <dbReference type="ChEBI" id="CHEBI:15378"/>
        <dbReference type="ChEBI" id="CHEBI:57856"/>
        <dbReference type="ChEBI" id="CHEBI:59789"/>
        <dbReference type="ChEBI" id="CHEBI:65315"/>
        <dbReference type="ChEBI" id="CHEBI:74478"/>
        <dbReference type="EC" id="2.1.1.166"/>
    </reaction>
</comment>
<comment type="subcellular location">
    <subcellularLocation>
        <location evidence="1">Cytoplasm</location>
    </subcellularLocation>
</comment>
<comment type="similarity">
    <text evidence="1">Belongs to the class I-like SAM-binding methyltransferase superfamily. RNA methyltransferase RlmE family.</text>
</comment>